<protein>
    <recommendedName>
        <fullName>ATP-dependent RNA helicase ded1</fullName>
        <ecNumber>3.6.4.13</ecNumber>
    </recommendedName>
</protein>
<keyword id="KW-0067">ATP-binding</keyword>
<keyword id="KW-0963">Cytoplasm</keyword>
<keyword id="KW-0347">Helicase</keyword>
<keyword id="KW-0378">Hydrolase</keyword>
<keyword id="KW-0396">Initiation factor</keyword>
<keyword id="KW-0547">Nucleotide-binding</keyword>
<keyword id="KW-0648">Protein biosynthesis</keyword>
<keyword id="KW-1185">Reference proteome</keyword>
<keyword id="KW-0694">RNA-binding</keyword>
<dbReference type="EC" id="3.6.4.13"/>
<dbReference type="EMBL" id="AAHF01000005">
    <property type="protein sequence ID" value="EAL90021.1"/>
    <property type="molecule type" value="Genomic_DNA"/>
</dbReference>
<dbReference type="RefSeq" id="XP_752059.1">
    <property type="nucleotide sequence ID" value="XM_746966.1"/>
</dbReference>
<dbReference type="SMR" id="Q4WP13"/>
<dbReference type="FunCoup" id="Q4WP13">
    <property type="interactions" value="1261"/>
</dbReference>
<dbReference type="STRING" id="330879.Q4WP13"/>
<dbReference type="EnsemblFungi" id="EAL90021">
    <property type="protein sequence ID" value="EAL90021"/>
    <property type="gene ID" value="AFUA_4G07660"/>
</dbReference>
<dbReference type="GeneID" id="3509714"/>
<dbReference type="KEGG" id="afm:AFUA_4G07660"/>
<dbReference type="VEuPathDB" id="FungiDB:Afu4g07660"/>
<dbReference type="eggNOG" id="KOG0335">
    <property type="taxonomic scope" value="Eukaryota"/>
</dbReference>
<dbReference type="HOGENOM" id="CLU_003041_16_3_1"/>
<dbReference type="InParanoid" id="Q4WP13"/>
<dbReference type="OMA" id="CYRSWVR"/>
<dbReference type="OrthoDB" id="196131at2759"/>
<dbReference type="Proteomes" id="UP000002530">
    <property type="component" value="Chromosome 4"/>
</dbReference>
<dbReference type="GO" id="GO:0010494">
    <property type="term" value="C:cytoplasmic stress granule"/>
    <property type="evidence" value="ECO:0007669"/>
    <property type="project" value="EnsemblFungi"/>
</dbReference>
<dbReference type="GO" id="GO:0005634">
    <property type="term" value="C:nucleus"/>
    <property type="evidence" value="ECO:0000318"/>
    <property type="project" value="GO_Central"/>
</dbReference>
<dbReference type="GO" id="GO:0005681">
    <property type="term" value="C:spliceosomal complex"/>
    <property type="evidence" value="ECO:0007669"/>
    <property type="project" value="EnsemblFungi"/>
</dbReference>
<dbReference type="GO" id="GO:0005524">
    <property type="term" value="F:ATP binding"/>
    <property type="evidence" value="ECO:0007669"/>
    <property type="project" value="UniProtKB-KW"/>
</dbReference>
<dbReference type="GO" id="GO:0016887">
    <property type="term" value="F:ATP hydrolysis activity"/>
    <property type="evidence" value="ECO:0007669"/>
    <property type="project" value="RHEA"/>
</dbReference>
<dbReference type="GO" id="GO:0031370">
    <property type="term" value="F:eukaryotic initiation factor 4G binding"/>
    <property type="evidence" value="ECO:0007669"/>
    <property type="project" value="EnsemblFungi"/>
</dbReference>
<dbReference type="GO" id="GO:0051880">
    <property type="term" value="F:G-quadruplex DNA binding"/>
    <property type="evidence" value="ECO:0007669"/>
    <property type="project" value="EnsemblFungi"/>
</dbReference>
<dbReference type="GO" id="GO:0002151">
    <property type="term" value="F:G-quadruplex RNA binding"/>
    <property type="evidence" value="ECO:0007669"/>
    <property type="project" value="EnsemblFungi"/>
</dbReference>
<dbReference type="GO" id="GO:0003729">
    <property type="term" value="F:mRNA binding"/>
    <property type="evidence" value="ECO:0000318"/>
    <property type="project" value="GO_Central"/>
</dbReference>
<dbReference type="GO" id="GO:0003724">
    <property type="term" value="F:RNA helicase activity"/>
    <property type="evidence" value="ECO:0000318"/>
    <property type="project" value="GO_Central"/>
</dbReference>
<dbReference type="GO" id="GO:0033592">
    <property type="term" value="F:RNA strand annealing activity"/>
    <property type="evidence" value="ECO:0007669"/>
    <property type="project" value="EnsemblFungi"/>
</dbReference>
<dbReference type="GO" id="GO:0003743">
    <property type="term" value="F:translation initiation factor activity"/>
    <property type="evidence" value="ECO:0007669"/>
    <property type="project" value="UniProtKB-KW"/>
</dbReference>
<dbReference type="GO" id="GO:0002183">
    <property type="term" value="P:cytoplasmic translational initiation"/>
    <property type="evidence" value="ECO:0007669"/>
    <property type="project" value="EnsemblFungi"/>
</dbReference>
<dbReference type="GO" id="GO:1990625">
    <property type="term" value="P:negative regulation of cytoplasmic translational initiation in response to stress"/>
    <property type="evidence" value="ECO:0007669"/>
    <property type="project" value="EnsemblFungi"/>
</dbReference>
<dbReference type="GO" id="GO:1901195">
    <property type="term" value="P:positive regulation of formation of translation preinitiation complex"/>
    <property type="evidence" value="ECO:0007669"/>
    <property type="project" value="EnsemblFungi"/>
</dbReference>
<dbReference type="GO" id="GO:0031047">
    <property type="term" value="P:regulatory ncRNA-mediated gene silencing"/>
    <property type="evidence" value="ECO:0007669"/>
    <property type="project" value="EnsemblFungi"/>
</dbReference>
<dbReference type="GO" id="GO:0000390">
    <property type="term" value="P:spliceosomal complex disassembly"/>
    <property type="evidence" value="ECO:0007669"/>
    <property type="project" value="EnsemblFungi"/>
</dbReference>
<dbReference type="CDD" id="cd17967">
    <property type="entry name" value="DEADc_DDX3_DDX4"/>
    <property type="match status" value="1"/>
</dbReference>
<dbReference type="CDD" id="cd18787">
    <property type="entry name" value="SF2_C_DEAD"/>
    <property type="match status" value="1"/>
</dbReference>
<dbReference type="FunFam" id="3.40.50.300:FF:000160">
    <property type="entry name" value="ATP-dependent RNA helicase DDX3X"/>
    <property type="match status" value="1"/>
</dbReference>
<dbReference type="FunFam" id="3.40.50.300:FF:000008">
    <property type="entry name" value="ATP-dependent RNA helicase RhlB"/>
    <property type="match status" value="1"/>
</dbReference>
<dbReference type="Gene3D" id="3.40.50.300">
    <property type="entry name" value="P-loop containing nucleotide triphosphate hydrolases"/>
    <property type="match status" value="2"/>
</dbReference>
<dbReference type="InterPro" id="IPR011545">
    <property type="entry name" value="DEAD/DEAH_box_helicase_dom"/>
</dbReference>
<dbReference type="InterPro" id="IPR044763">
    <property type="entry name" value="Ded1/Dbp1_DEADc"/>
</dbReference>
<dbReference type="InterPro" id="IPR014001">
    <property type="entry name" value="Helicase_ATP-bd"/>
</dbReference>
<dbReference type="InterPro" id="IPR001650">
    <property type="entry name" value="Helicase_C-like"/>
</dbReference>
<dbReference type="InterPro" id="IPR027417">
    <property type="entry name" value="P-loop_NTPase"/>
</dbReference>
<dbReference type="InterPro" id="IPR000629">
    <property type="entry name" value="RNA-helicase_DEAD-box_CS"/>
</dbReference>
<dbReference type="InterPro" id="IPR014014">
    <property type="entry name" value="RNA_helicase_DEAD_Q_motif"/>
</dbReference>
<dbReference type="PANTHER" id="PTHR47958">
    <property type="entry name" value="ATP-DEPENDENT RNA HELICASE DBP3"/>
    <property type="match status" value="1"/>
</dbReference>
<dbReference type="Pfam" id="PF00270">
    <property type="entry name" value="DEAD"/>
    <property type="match status" value="1"/>
</dbReference>
<dbReference type="Pfam" id="PF00271">
    <property type="entry name" value="Helicase_C"/>
    <property type="match status" value="1"/>
</dbReference>
<dbReference type="SMART" id="SM00487">
    <property type="entry name" value="DEXDc"/>
    <property type="match status" value="1"/>
</dbReference>
<dbReference type="SMART" id="SM00490">
    <property type="entry name" value="HELICc"/>
    <property type="match status" value="1"/>
</dbReference>
<dbReference type="SUPFAM" id="SSF52540">
    <property type="entry name" value="P-loop containing nucleoside triphosphate hydrolases"/>
    <property type="match status" value="1"/>
</dbReference>
<dbReference type="PROSITE" id="PS00039">
    <property type="entry name" value="DEAD_ATP_HELICASE"/>
    <property type="match status" value="1"/>
</dbReference>
<dbReference type="PROSITE" id="PS51192">
    <property type="entry name" value="HELICASE_ATP_BIND_1"/>
    <property type="match status" value="1"/>
</dbReference>
<dbReference type="PROSITE" id="PS51194">
    <property type="entry name" value="HELICASE_CTER"/>
    <property type="match status" value="1"/>
</dbReference>
<dbReference type="PROSITE" id="PS51195">
    <property type="entry name" value="Q_MOTIF"/>
    <property type="match status" value="1"/>
</dbReference>
<proteinExistence type="inferred from homology"/>
<sequence length="674" mass="72091">MADSLKMGNLSLNESQHAPAAPPSNGRAAYIPPHLRQRTMGANVDGAAASPPGPAPGAGAWNGPRNAPRGGNWANANASDFSPRGPNVPNGNISWTPTETQRRPFNPHAYGHPGHGGSYGGSHGSAKGSGDGQWRDGKHIPGPANARLERELFGVPNDPTKQSTGINFANYDDIPVEASGHDVPEPVNAFTNPPLDDHLISNIKLARYQTPTPVQKYSIPIVMNGRDLMACAQTGSGKTGGFLFPILSQAFQTGPSPVPAQASGQFGYGRQRKAYPTSLILAPTRELVSQIFDEARKFAYRSWVRPCVVYGGADIGSQLRQIERGCDLLVATPGRLVDLIERGRISLVNIKYLVLDEADRMLDMGFEPQIRRIVEGEDMPNVNERQTLMFSATFPRDIQMLARDFLKDYVFLSVGRVGSTSENITQKVEYVEDHDKRSVLLDILHTHGTSGLTLIFVETKRMADALSDFLLNQRFPATAIHGDRTQRERERALEMFRSGRCPILVATAVAARGLDIPNVTHVINYDLPTDIDDYVHRIGRTGRAGNTGIATAFFNRSNRGVVRELIDLLKEAHQEVPSFLESIAREGSGYGGRGGRGGRGRGGNATRDMRRMGGNVGGGGPSFGGGYGAPSGSSYGGGAGGYGAPPAYGGGYGGGYGGGSYGNPSGPTGPSSWW</sequence>
<comment type="function">
    <text evidence="1">ATP-binding RNA helicase involved in translation initiation. Remodels RNA in response to ADP and ATP concentrations by facilitating disruption, but also formation of RNA duplexes (By similarity).</text>
</comment>
<comment type="catalytic activity">
    <reaction>
        <text>ATP + H2O = ADP + phosphate + H(+)</text>
        <dbReference type="Rhea" id="RHEA:13065"/>
        <dbReference type="ChEBI" id="CHEBI:15377"/>
        <dbReference type="ChEBI" id="CHEBI:15378"/>
        <dbReference type="ChEBI" id="CHEBI:30616"/>
        <dbReference type="ChEBI" id="CHEBI:43474"/>
        <dbReference type="ChEBI" id="CHEBI:456216"/>
        <dbReference type="EC" id="3.6.4.13"/>
    </reaction>
</comment>
<comment type="subcellular location">
    <subcellularLocation>
        <location evidence="1">Cytoplasm</location>
    </subcellularLocation>
</comment>
<comment type="domain">
    <text>The Q motif is unique to and characteristic of the DEAD box family of RNA helicases and controls ATP binding and hydrolysis.</text>
</comment>
<comment type="similarity">
    <text evidence="5">Belongs to the DEAD box helicase family. DDX3/DED1 subfamily.</text>
</comment>
<name>DED1_ASPFU</name>
<reference key="1">
    <citation type="journal article" date="2005" name="Nature">
        <title>Genomic sequence of the pathogenic and allergenic filamentous fungus Aspergillus fumigatus.</title>
        <authorList>
            <person name="Nierman W.C."/>
            <person name="Pain A."/>
            <person name="Anderson M.J."/>
            <person name="Wortman J.R."/>
            <person name="Kim H.S."/>
            <person name="Arroyo J."/>
            <person name="Berriman M."/>
            <person name="Abe K."/>
            <person name="Archer D.B."/>
            <person name="Bermejo C."/>
            <person name="Bennett J.W."/>
            <person name="Bowyer P."/>
            <person name="Chen D."/>
            <person name="Collins M."/>
            <person name="Coulsen R."/>
            <person name="Davies R."/>
            <person name="Dyer P.S."/>
            <person name="Farman M.L."/>
            <person name="Fedorova N."/>
            <person name="Fedorova N.D."/>
            <person name="Feldblyum T.V."/>
            <person name="Fischer R."/>
            <person name="Fosker N."/>
            <person name="Fraser A."/>
            <person name="Garcia J.L."/>
            <person name="Garcia M.J."/>
            <person name="Goble A."/>
            <person name="Goldman G.H."/>
            <person name="Gomi K."/>
            <person name="Griffith-Jones S."/>
            <person name="Gwilliam R."/>
            <person name="Haas B.J."/>
            <person name="Haas H."/>
            <person name="Harris D.E."/>
            <person name="Horiuchi H."/>
            <person name="Huang J."/>
            <person name="Humphray S."/>
            <person name="Jimenez J."/>
            <person name="Keller N."/>
            <person name="Khouri H."/>
            <person name="Kitamoto K."/>
            <person name="Kobayashi T."/>
            <person name="Konzack S."/>
            <person name="Kulkarni R."/>
            <person name="Kumagai T."/>
            <person name="Lafton A."/>
            <person name="Latge J.-P."/>
            <person name="Li W."/>
            <person name="Lord A."/>
            <person name="Lu C."/>
            <person name="Majoros W.H."/>
            <person name="May G.S."/>
            <person name="Miller B.L."/>
            <person name="Mohamoud Y."/>
            <person name="Molina M."/>
            <person name="Monod M."/>
            <person name="Mouyna I."/>
            <person name="Mulligan S."/>
            <person name="Murphy L.D."/>
            <person name="O'Neil S."/>
            <person name="Paulsen I."/>
            <person name="Penalva M.A."/>
            <person name="Pertea M."/>
            <person name="Price C."/>
            <person name="Pritchard B.L."/>
            <person name="Quail M.A."/>
            <person name="Rabbinowitsch E."/>
            <person name="Rawlins N."/>
            <person name="Rajandream M.A."/>
            <person name="Reichard U."/>
            <person name="Renauld H."/>
            <person name="Robson G.D."/>
            <person name="Rodriguez de Cordoba S."/>
            <person name="Rodriguez-Pena J.M."/>
            <person name="Ronning C.M."/>
            <person name="Rutter S."/>
            <person name="Salzberg S.L."/>
            <person name="Sanchez M."/>
            <person name="Sanchez-Ferrero J.C."/>
            <person name="Saunders D."/>
            <person name="Seeger K."/>
            <person name="Squares R."/>
            <person name="Squares S."/>
            <person name="Takeuchi M."/>
            <person name="Tekaia F."/>
            <person name="Turner G."/>
            <person name="Vazquez de Aldana C.R."/>
            <person name="Weidman J."/>
            <person name="White O."/>
            <person name="Woodward J.R."/>
            <person name="Yu J.-H."/>
            <person name="Fraser C.M."/>
            <person name="Galagan J.E."/>
            <person name="Asai K."/>
            <person name="Machida M."/>
            <person name="Hall N."/>
            <person name="Barrell B.G."/>
            <person name="Denning D.W."/>
        </authorList>
    </citation>
    <scope>NUCLEOTIDE SEQUENCE [LARGE SCALE GENOMIC DNA]</scope>
    <source>
        <strain>ATCC MYA-4609 / CBS 101355 / FGSC A1100 / Af293</strain>
    </source>
</reference>
<gene>
    <name type="primary">ded1</name>
    <name type="ORF">AFUA_4G07660</name>
</gene>
<evidence type="ECO:0000250" key="1"/>
<evidence type="ECO:0000255" key="2">
    <source>
        <dbReference type="PROSITE-ProRule" id="PRU00541"/>
    </source>
</evidence>
<evidence type="ECO:0000255" key="3">
    <source>
        <dbReference type="PROSITE-ProRule" id="PRU00542"/>
    </source>
</evidence>
<evidence type="ECO:0000256" key="4">
    <source>
        <dbReference type="SAM" id="MobiDB-lite"/>
    </source>
</evidence>
<evidence type="ECO:0000305" key="5"/>
<feature type="chain" id="PRO_0000232153" description="ATP-dependent RNA helicase ded1">
    <location>
        <begin position="1"/>
        <end position="674"/>
    </location>
</feature>
<feature type="domain" description="Helicase ATP-binding" evidence="2">
    <location>
        <begin position="219"/>
        <end position="412"/>
    </location>
</feature>
<feature type="domain" description="Helicase C-terminal" evidence="3">
    <location>
        <begin position="423"/>
        <end position="584"/>
    </location>
</feature>
<feature type="region of interest" description="Disordered" evidence="4">
    <location>
        <begin position="45"/>
        <end position="143"/>
    </location>
</feature>
<feature type="region of interest" description="Disordered" evidence="4">
    <location>
        <begin position="585"/>
        <end position="617"/>
    </location>
</feature>
<feature type="region of interest" description="Disordered" evidence="4">
    <location>
        <begin position="653"/>
        <end position="674"/>
    </location>
</feature>
<feature type="short sequence motif" description="Q motif">
    <location>
        <begin position="188"/>
        <end position="216"/>
    </location>
</feature>
<feature type="short sequence motif" description="DEAD box">
    <location>
        <begin position="356"/>
        <end position="359"/>
    </location>
</feature>
<feature type="compositionally biased region" description="Low complexity" evidence="4">
    <location>
        <begin position="57"/>
        <end position="68"/>
    </location>
</feature>
<feature type="compositionally biased region" description="Polar residues" evidence="4">
    <location>
        <begin position="89"/>
        <end position="99"/>
    </location>
</feature>
<feature type="compositionally biased region" description="Gly residues" evidence="4">
    <location>
        <begin position="113"/>
        <end position="131"/>
    </location>
</feature>
<feature type="compositionally biased region" description="Gly residues" evidence="4">
    <location>
        <begin position="588"/>
        <end position="603"/>
    </location>
</feature>
<feature type="compositionally biased region" description="Low complexity" evidence="4">
    <location>
        <begin position="662"/>
        <end position="674"/>
    </location>
</feature>
<feature type="binding site" evidence="2">
    <location>
        <begin position="232"/>
        <end position="239"/>
    </location>
    <ligand>
        <name>ATP</name>
        <dbReference type="ChEBI" id="CHEBI:30616"/>
    </ligand>
</feature>
<accession>Q4WP13</accession>
<organism>
    <name type="scientific">Aspergillus fumigatus (strain ATCC MYA-4609 / CBS 101355 / FGSC A1100 / Af293)</name>
    <name type="common">Neosartorya fumigata</name>
    <dbReference type="NCBI Taxonomy" id="330879"/>
    <lineage>
        <taxon>Eukaryota</taxon>
        <taxon>Fungi</taxon>
        <taxon>Dikarya</taxon>
        <taxon>Ascomycota</taxon>
        <taxon>Pezizomycotina</taxon>
        <taxon>Eurotiomycetes</taxon>
        <taxon>Eurotiomycetidae</taxon>
        <taxon>Eurotiales</taxon>
        <taxon>Aspergillaceae</taxon>
        <taxon>Aspergillus</taxon>
        <taxon>Aspergillus subgen. Fumigati</taxon>
    </lineage>
</organism>